<keyword id="KW-0030">Aminoacyl-tRNA synthetase</keyword>
<keyword id="KW-0067">ATP-binding</keyword>
<keyword id="KW-0963">Cytoplasm</keyword>
<keyword id="KW-0436">Ligase</keyword>
<keyword id="KW-0479">Metal-binding</keyword>
<keyword id="KW-0547">Nucleotide-binding</keyword>
<keyword id="KW-0648">Protein biosynthesis</keyword>
<keyword id="KW-0694">RNA-binding</keyword>
<keyword id="KW-0820">tRNA-binding</keyword>
<keyword id="KW-0862">Zinc</keyword>
<feature type="chain" id="PRO_1000020487" description="Threonine--tRNA ligase">
    <location>
        <begin position="1"/>
        <end position="661"/>
    </location>
</feature>
<feature type="domain" description="TGS" evidence="2">
    <location>
        <begin position="1"/>
        <end position="64"/>
    </location>
</feature>
<feature type="region of interest" description="Catalytic" evidence="1">
    <location>
        <begin position="245"/>
        <end position="546"/>
    </location>
</feature>
<feature type="binding site" evidence="1">
    <location>
        <position position="341"/>
    </location>
    <ligand>
        <name>Zn(2+)</name>
        <dbReference type="ChEBI" id="CHEBI:29105"/>
    </ligand>
</feature>
<feature type="binding site" evidence="1">
    <location>
        <position position="392"/>
    </location>
    <ligand>
        <name>Zn(2+)</name>
        <dbReference type="ChEBI" id="CHEBI:29105"/>
    </ligand>
</feature>
<feature type="binding site" evidence="1">
    <location>
        <position position="523"/>
    </location>
    <ligand>
        <name>Zn(2+)</name>
        <dbReference type="ChEBI" id="CHEBI:29105"/>
    </ligand>
</feature>
<dbReference type="EC" id="6.1.1.3" evidence="1"/>
<dbReference type="EMBL" id="AM236080">
    <property type="protein sequence ID" value="CAK08016.1"/>
    <property type="molecule type" value="Genomic_DNA"/>
</dbReference>
<dbReference type="RefSeq" id="WP_011652084.1">
    <property type="nucleotide sequence ID" value="NC_008380.1"/>
</dbReference>
<dbReference type="SMR" id="Q1MGA7"/>
<dbReference type="EnsemblBacteria" id="CAK08016">
    <property type="protein sequence ID" value="CAK08016"/>
    <property type="gene ID" value="RL2528"/>
</dbReference>
<dbReference type="KEGG" id="rle:RL2528"/>
<dbReference type="eggNOG" id="COG0441">
    <property type="taxonomic scope" value="Bacteria"/>
</dbReference>
<dbReference type="HOGENOM" id="CLU_008554_0_1_5"/>
<dbReference type="Proteomes" id="UP000006575">
    <property type="component" value="Chromosome"/>
</dbReference>
<dbReference type="GO" id="GO:0005829">
    <property type="term" value="C:cytosol"/>
    <property type="evidence" value="ECO:0007669"/>
    <property type="project" value="TreeGrafter"/>
</dbReference>
<dbReference type="GO" id="GO:0005524">
    <property type="term" value="F:ATP binding"/>
    <property type="evidence" value="ECO:0007669"/>
    <property type="project" value="UniProtKB-UniRule"/>
</dbReference>
<dbReference type="GO" id="GO:0046872">
    <property type="term" value="F:metal ion binding"/>
    <property type="evidence" value="ECO:0007669"/>
    <property type="project" value="UniProtKB-KW"/>
</dbReference>
<dbReference type="GO" id="GO:0004829">
    <property type="term" value="F:threonine-tRNA ligase activity"/>
    <property type="evidence" value="ECO:0007669"/>
    <property type="project" value="UniProtKB-UniRule"/>
</dbReference>
<dbReference type="GO" id="GO:0000049">
    <property type="term" value="F:tRNA binding"/>
    <property type="evidence" value="ECO:0007669"/>
    <property type="project" value="UniProtKB-KW"/>
</dbReference>
<dbReference type="GO" id="GO:0006435">
    <property type="term" value="P:threonyl-tRNA aminoacylation"/>
    <property type="evidence" value="ECO:0007669"/>
    <property type="project" value="UniProtKB-UniRule"/>
</dbReference>
<dbReference type="CDD" id="cd01667">
    <property type="entry name" value="TGS_ThrRS"/>
    <property type="match status" value="1"/>
</dbReference>
<dbReference type="CDD" id="cd00860">
    <property type="entry name" value="ThrRS_anticodon"/>
    <property type="match status" value="1"/>
</dbReference>
<dbReference type="CDD" id="cd00771">
    <property type="entry name" value="ThrRS_core"/>
    <property type="match status" value="1"/>
</dbReference>
<dbReference type="FunFam" id="3.30.54.20:FF:000002">
    <property type="entry name" value="Threonine--tRNA ligase"/>
    <property type="match status" value="1"/>
</dbReference>
<dbReference type="FunFam" id="3.30.930.10:FF:000002">
    <property type="entry name" value="Threonine--tRNA ligase"/>
    <property type="match status" value="1"/>
</dbReference>
<dbReference type="FunFam" id="3.40.50.800:FF:000001">
    <property type="entry name" value="Threonine--tRNA ligase"/>
    <property type="match status" value="1"/>
</dbReference>
<dbReference type="FunFam" id="3.30.980.10:FF:000005">
    <property type="entry name" value="Threonyl-tRNA synthetase, mitochondrial"/>
    <property type="match status" value="1"/>
</dbReference>
<dbReference type="Gene3D" id="3.10.20.30">
    <property type="match status" value="1"/>
</dbReference>
<dbReference type="Gene3D" id="3.30.54.20">
    <property type="match status" value="1"/>
</dbReference>
<dbReference type="Gene3D" id="3.40.50.800">
    <property type="entry name" value="Anticodon-binding domain"/>
    <property type="match status" value="1"/>
</dbReference>
<dbReference type="Gene3D" id="3.30.930.10">
    <property type="entry name" value="Bira Bifunctional Protein, Domain 2"/>
    <property type="match status" value="1"/>
</dbReference>
<dbReference type="Gene3D" id="3.30.980.10">
    <property type="entry name" value="Threonyl-trna Synthetase, Chain A, domain 2"/>
    <property type="match status" value="1"/>
</dbReference>
<dbReference type="HAMAP" id="MF_00184">
    <property type="entry name" value="Thr_tRNA_synth"/>
    <property type="match status" value="1"/>
</dbReference>
<dbReference type="InterPro" id="IPR002314">
    <property type="entry name" value="aa-tRNA-synt_IIb"/>
</dbReference>
<dbReference type="InterPro" id="IPR006195">
    <property type="entry name" value="aa-tRNA-synth_II"/>
</dbReference>
<dbReference type="InterPro" id="IPR045864">
    <property type="entry name" value="aa-tRNA-synth_II/BPL/LPL"/>
</dbReference>
<dbReference type="InterPro" id="IPR004154">
    <property type="entry name" value="Anticodon-bd"/>
</dbReference>
<dbReference type="InterPro" id="IPR036621">
    <property type="entry name" value="Anticodon-bd_dom_sf"/>
</dbReference>
<dbReference type="InterPro" id="IPR012675">
    <property type="entry name" value="Beta-grasp_dom_sf"/>
</dbReference>
<dbReference type="InterPro" id="IPR004095">
    <property type="entry name" value="TGS"/>
</dbReference>
<dbReference type="InterPro" id="IPR012676">
    <property type="entry name" value="TGS-like"/>
</dbReference>
<dbReference type="InterPro" id="IPR002320">
    <property type="entry name" value="Thr-tRNA-ligase_IIa"/>
</dbReference>
<dbReference type="InterPro" id="IPR018163">
    <property type="entry name" value="Thr/Ala-tRNA-synth_IIc_edit"/>
</dbReference>
<dbReference type="InterPro" id="IPR047246">
    <property type="entry name" value="ThrRS_anticodon"/>
</dbReference>
<dbReference type="InterPro" id="IPR033728">
    <property type="entry name" value="ThrRS_core"/>
</dbReference>
<dbReference type="InterPro" id="IPR012947">
    <property type="entry name" value="tRNA_SAD"/>
</dbReference>
<dbReference type="NCBIfam" id="TIGR00418">
    <property type="entry name" value="thrS"/>
    <property type="match status" value="1"/>
</dbReference>
<dbReference type="PANTHER" id="PTHR11451:SF44">
    <property type="entry name" value="THREONINE--TRNA LIGASE, CHLOROPLASTIC_MITOCHONDRIAL 2"/>
    <property type="match status" value="1"/>
</dbReference>
<dbReference type="PANTHER" id="PTHR11451">
    <property type="entry name" value="THREONINE-TRNA LIGASE"/>
    <property type="match status" value="1"/>
</dbReference>
<dbReference type="Pfam" id="PF03129">
    <property type="entry name" value="HGTP_anticodon"/>
    <property type="match status" value="1"/>
</dbReference>
<dbReference type="Pfam" id="PF02824">
    <property type="entry name" value="TGS"/>
    <property type="match status" value="1"/>
</dbReference>
<dbReference type="Pfam" id="PF00587">
    <property type="entry name" value="tRNA-synt_2b"/>
    <property type="match status" value="1"/>
</dbReference>
<dbReference type="Pfam" id="PF07973">
    <property type="entry name" value="tRNA_SAD"/>
    <property type="match status" value="1"/>
</dbReference>
<dbReference type="PRINTS" id="PR01047">
    <property type="entry name" value="TRNASYNTHTHR"/>
</dbReference>
<dbReference type="SMART" id="SM00863">
    <property type="entry name" value="tRNA_SAD"/>
    <property type="match status" value="1"/>
</dbReference>
<dbReference type="SUPFAM" id="SSF52954">
    <property type="entry name" value="Class II aaRS ABD-related"/>
    <property type="match status" value="1"/>
</dbReference>
<dbReference type="SUPFAM" id="SSF55681">
    <property type="entry name" value="Class II aaRS and biotin synthetases"/>
    <property type="match status" value="1"/>
</dbReference>
<dbReference type="SUPFAM" id="SSF81271">
    <property type="entry name" value="TGS-like"/>
    <property type="match status" value="1"/>
</dbReference>
<dbReference type="SUPFAM" id="SSF55186">
    <property type="entry name" value="ThrRS/AlaRS common domain"/>
    <property type="match status" value="1"/>
</dbReference>
<dbReference type="PROSITE" id="PS50862">
    <property type="entry name" value="AA_TRNA_LIGASE_II"/>
    <property type="match status" value="1"/>
</dbReference>
<dbReference type="PROSITE" id="PS51880">
    <property type="entry name" value="TGS"/>
    <property type="match status" value="1"/>
</dbReference>
<reference key="1">
    <citation type="journal article" date="2006" name="Genome Biol.">
        <title>The genome of Rhizobium leguminosarum has recognizable core and accessory components.</title>
        <authorList>
            <person name="Young J.P.W."/>
            <person name="Crossman L.C."/>
            <person name="Johnston A.W.B."/>
            <person name="Thomson N.R."/>
            <person name="Ghazoui Z.F."/>
            <person name="Hull K.H."/>
            <person name="Wexler M."/>
            <person name="Curson A.R.J."/>
            <person name="Todd J.D."/>
            <person name="Poole P.S."/>
            <person name="Mauchline T.H."/>
            <person name="East A.K."/>
            <person name="Quail M.A."/>
            <person name="Churcher C."/>
            <person name="Arrowsmith C."/>
            <person name="Cherevach I."/>
            <person name="Chillingworth T."/>
            <person name="Clarke K."/>
            <person name="Cronin A."/>
            <person name="Davis P."/>
            <person name="Fraser A."/>
            <person name="Hance Z."/>
            <person name="Hauser H."/>
            <person name="Jagels K."/>
            <person name="Moule S."/>
            <person name="Mungall K."/>
            <person name="Norbertczak H."/>
            <person name="Rabbinowitsch E."/>
            <person name="Sanders M."/>
            <person name="Simmonds M."/>
            <person name="Whitehead S."/>
            <person name="Parkhill J."/>
        </authorList>
    </citation>
    <scope>NUCLEOTIDE SEQUENCE [LARGE SCALE GENOMIC DNA]</scope>
    <source>
        <strain>DSM 114642 / LMG 32736 / 3841</strain>
    </source>
</reference>
<name>SYT_RHIJ3</name>
<protein>
    <recommendedName>
        <fullName evidence="1">Threonine--tRNA ligase</fullName>
        <ecNumber evidence="1">6.1.1.3</ecNumber>
    </recommendedName>
    <alternativeName>
        <fullName evidence="1">Threonyl-tRNA synthetase</fullName>
        <shortName evidence="1">ThrRS</shortName>
    </alternativeName>
</protein>
<evidence type="ECO:0000255" key="1">
    <source>
        <dbReference type="HAMAP-Rule" id="MF_00184"/>
    </source>
</evidence>
<evidence type="ECO:0000255" key="2">
    <source>
        <dbReference type="PROSITE-ProRule" id="PRU01228"/>
    </source>
</evidence>
<comment type="function">
    <text evidence="1">Catalyzes the attachment of threonine to tRNA(Thr) in a two-step reaction: L-threonine is first activated by ATP to form Thr-AMP and then transferred to the acceptor end of tRNA(Thr). Also edits incorrectly charged L-seryl-tRNA(Thr).</text>
</comment>
<comment type="catalytic activity">
    <reaction evidence="1">
        <text>tRNA(Thr) + L-threonine + ATP = L-threonyl-tRNA(Thr) + AMP + diphosphate + H(+)</text>
        <dbReference type="Rhea" id="RHEA:24624"/>
        <dbReference type="Rhea" id="RHEA-COMP:9670"/>
        <dbReference type="Rhea" id="RHEA-COMP:9704"/>
        <dbReference type="ChEBI" id="CHEBI:15378"/>
        <dbReference type="ChEBI" id="CHEBI:30616"/>
        <dbReference type="ChEBI" id="CHEBI:33019"/>
        <dbReference type="ChEBI" id="CHEBI:57926"/>
        <dbReference type="ChEBI" id="CHEBI:78442"/>
        <dbReference type="ChEBI" id="CHEBI:78534"/>
        <dbReference type="ChEBI" id="CHEBI:456215"/>
        <dbReference type="EC" id="6.1.1.3"/>
    </reaction>
</comment>
<comment type="cofactor">
    <cofactor evidence="1">
        <name>Zn(2+)</name>
        <dbReference type="ChEBI" id="CHEBI:29105"/>
    </cofactor>
    <text evidence="1">Binds 1 zinc ion per subunit.</text>
</comment>
<comment type="subunit">
    <text evidence="1">Homodimer.</text>
</comment>
<comment type="subcellular location">
    <subcellularLocation>
        <location evidence="1">Cytoplasm</location>
    </subcellularLocation>
</comment>
<comment type="similarity">
    <text evidence="1">Belongs to the class-II aminoacyl-tRNA synthetase family.</text>
</comment>
<sequence>MSQAISLTFPDGSVRGYDAGATGRDVAESISKSLAKKAVAVAIDGTVRDLSDPVTTGRIEIITRNDDRALELIRHDAAHVMAEAVQELWPGTQVTIGPVIENGFYYDFAKNEPFTLDDLPKIEKKMKEIIARNAAFTKQVWSRDRAKQVFADKGEQYKVELVDAIPEGQDLKIYYQGDWFDLCRGPHMASTGQIGSAFKLLKVAGAYWRGDSNNPMLSRIYGTAFAEQSELDNYLHMLAEAEKRDHRRLGREMDLFHFQEEGPGVVFWHGKGWRVFQTLVAYMRRRLAGDYQEVNAPQVLDKSLWETSGHWGWYRDSMFKVTVAGDDTDDDRVFALKPMNCPGHIQIFKHGLKSYRELPIRLAEFGNVHRYEPSGALHGLMRVRGFTQDDAHIFCTDEQMAAECLKINDLILSVYKDFGFDEVTIKLSTRPDKRVGSDELWDRAESVMMGVLETIQQQSNNIKTGILPGEGAFYGPKFEYTLKDAIGREWQCGTTQVDFNLPERFGAFYIDSNSEKTQPVMIHRAICGSMERFLGILIENFAGHMPLWVSPLQVVVATITSEADAYGLEVAEALREAGLNVETDFRNEKINYKIREHSVTKVPVIIVCGRKEAEERTVNIRRLGSQDQVSMGLDAAVESLALEATPPDIRRKAEARKAKAA</sequence>
<proteinExistence type="inferred from homology"/>
<accession>Q1MGA7</accession>
<gene>
    <name evidence="1" type="primary">thrS</name>
    <name type="ordered locus">RL2528</name>
</gene>
<organism>
    <name type="scientific">Rhizobium johnstonii (strain DSM 114642 / LMG 32736 / 3841)</name>
    <name type="common">Rhizobium leguminosarum bv. viciae</name>
    <dbReference type="NCBI Taxonomy" id="216596"/>
    <lineage>
        <taxon>Bacteria</taxon>
        <taxon>Pseudomonadati</taxon>
        <taxon>Pseudomonadota</taxon>
        <taxon>Alphaproteobacteria</taxon>
        <taxon>Hyphomicrobiales</taxon>
        <taxon>Rhizobiaceae</taxon>
        <taxon>Rhizobium/Agrobacterium group</taxon>
        <taxon>Rhizobium</taxon>
        <taxon>Rhizobium johnstonii</taxon>
    </lineage>
</organism>